<gene>
    <name evidence="1" type="primary">atpH</name>
    <name type="ordered locus">SPT_1447</name>
</gene>
<accession>C1CSD1</accession>
<evidence type="ECO:0000255" key="1">
    <source>
        <dbReference type="HAMAP-Rule" id="MF_01416"/>
    </source>
</evidence>
<protein>
    <recommendedName>
        <fullName evidence="1">ATP synthase subunit delta</fullName>
    </recommendedName>
    <alternativeName>
        <fullName evidence="1">ATP synthase F(1) sector subunit delta</fullName>
    </alternativeName>
    <alternativeName>
        <fullName evidence="1">F-type ATPase subunit delta</fullName>
        <shortName evidence="1">F-ATPase subunit delta</shortName>
    </alternativeName>
</protein>
<feature type="chain" id="PRO_1000184819" description="ATP synthase subunit delta">
    <location>
        <begin position="1"/>
        <end position="178"/>
    </location>
</feature>
<sequence length="178" mass="20541">MDKKTVKVIEKYSMPFVQLVLEKGEEDRIFSDLTQIKQVVEKTGLPSFLKQVAVDESDKEKTIAFFQDSVSPLLQNFIQVLAYNHRANLFYDVLVDCLNRLEKETNRFEVTITSAHPLTDEQKTRLLPLIEKKMSLKVRSVKEQIDESLIGGFVIFANHKTIDVSIKQQLKVVKENLK</sequence>
<organism>
    <name type="scientific">Streptococcus pneumoniae (strain Taiwan19F-14)</name>
    <dbReference type="NCBI Taxonomy" id="487213"/>
    <lineage>
        <taxon>Bacteria</taxon>
        <taxon>Bacillati</taxon>
        <taxon>Bacillota</taxon>
        <taxon>Bacilli</taxon>
        <taxon>Lactobacillales</taxon>
        <taxon>Streptococcaceae</taxon>
        <taxon>Streptococcus</taxon>
    </lineage>
</organism>
<dbReference type="EMBL" id="CP000921">
    <property type="protein sequence ID" value="ACO22856.1"/>
    <property type="molecule type" value="Genomic_DNA"/>
</dbReference>
<dbReference type="RefSeq" id="WP_000359036.1">
    <property type="nucleotide sequence ID" value="NC_012469.1"/>
</dbReference>
<dbReference type="SMR" id="C1CSD1"/>
<dbReference type="KEGG" id="snt:SPT_1447"/>
<dbReference type="HOGENOM" id="CLU_085114_1_2_9"/>
<dbReference type="GO" id="GO:0005886">
    <property type="term" value="C:plasma membrane"/>
    <property type="evidence" value="ECO:0007669"/>
    <property type="project" value="UniProtKB-SubCell"/>
</dbReference>
<dbReference type="GO" id="GO:0045259">
    <property type="term" value="C:proton-transporting ATP synthase complex"/>
    <property type="evidence" value="ECO:0007669"/>
    <property type="project" value="UniProtKB-KW"/>
</dbReference>
<dbReference type="GO" id="GO:0046933">
    <property type="term" value="F:proton-transporting ATP synthase activity, rotational mechanism"/>
    <property type="evidence" value="ECO:0007669"/>
    <property type="project" value="UniProtKB-UniRule"/>
</dbReference>
<dbReference type="Gene3D" id="1.10.520.20">
    <property type="entry name" value="N-terminal domain of the delta subunit of the F1F0-ATP synthase"/>
    <property type="match status" value="1"/>
</dbReference>
<dbReference type="HAMAP" id="MF_01416">
    <property type="entry name" value="ATP_synth_delta_bact"/>
    <property type="match status" value="1"/>
</dbReference>
<dbReference type="InterPro" id="IPR026015">
    <property type="entry name" value="ATP_synth_OSCP/delta_N_sf"/>
</dbReference>
<dbReference type="InterPro" id="IPR000711">
    <property type="entry name" value="ATPase_OSCP/dsu"/>
</dbReference>
<dbReference type="NCBIfam" id="TIGR01145">
    <property type="entry name" value="ATP_synt_delta"/>
    <property type="match status" value="1"/>
</dbReference>
<dbReference type="NCBIfam" id="NF004401">
    <property type="entry name" value="PRK05758.2-1"/>
    <property type="match status" value="1"/>
</dbReference>
<dbReference type="PANTHER" id="PTHR11910">
    <property type="entry name" value="ATP SYNTHASE DELTA CHAIN"/>
    <property type="match status" value="1"/>
</dbReference>
<dbReference type="Pfam" id="PF00213">
    <property type="entry name" value="OSCP"/>
    <property type="match status" value="1"/>
</dbReference>
<dbReference type="PRINTS" id="PR00125">
    <property type="entry name" value="ATPASEDELTA"/>
</dbReference>
<dbReference type="SUPFAM" id="SSF47928">
    <property type="entry name" value="N-terminal domain of the delta subunit of the F1F0-ATP synthase"/>
    <property type="match status" value="1"/>
</dbReference>
<proteinExistence type="inferred from homology"/>
<comment type="function">
    <text evidence="1">F(1)F(0) ATP synthase produces ATP from ADP in the presence of a proton or sodium gradient. F-type ATPases consist of two structural domains, F(1) containing the extramembraneous catalytic core and F(0) containing the membrane proton channel, linked together by a central stalk and a peripheral stalk. During catalysis, ATP synthesis in the catalytic domain of F(1) is coupled via a rotary mechanism of the central stalk subunits to proton translocation.</text>
</comment>
<comment type="function">
    <text evidence="1">This protein is part of the stalk that links CF(0) to CF(1). It either transmits conformational changes from CF(0) to CF(1) or is implicated in proton conduction.</text>
</comment>
<comment type="subunit">
    <text evidence="1">F-type ATPases have 2 components, F(1) - the catalytic core - and F(0) - the membrane proton channel. F(1) has five subunits: alpha(3), beta(3), gamma(1), delta(1), epsilon(1). F(0) has three main subunits: a(1), b(2) and c(10-14). The alpha and beta chains form an alternating ring which encloses part of the gamma chain. F(1) is attached to F(0) by a central stalk formed by the gamma and epsilon chains, while a peripheral stalk is formed by the delta and b chains.</text>
</comment>
<comment type="subcellular location">
    <subcellularLocation>
        <location evidence="1">Cell membrane</location>
        <topology evidence="1">Peripheral membrane protein</topology>
    </subcellularLocation>
</comment>
<comment type="similarity">
    <text evidence="1">Belongs to the ATPase delta chain family.</text>
</comment>
<name>ATPD_STRZT</name>
<reference key="1">
    <citation type="journal article" date="2010" name="Genome Biol.">
        <title>Structure and dynamics of the pan-genome of Streptococcus pneumoniae and closely related species.</title>
        <authorList>
            <person name="Donati C."/>
            <person name="Hiller N.L."/>
            <person name="Tettelin H."/>
            <person name="Muzzi A."/>
            <person name="Croucher N.J."/>
            <person name="Angiuoli S.V."/>
            <person name="Oggioni M."/>
            <person name="Dunning Hotopp J.C."/>
            <person name="Hu F.Z."/>
            <person name="Riley D.R."/>
            <person name="Covacci A."/>
            <person name="Mitchell T.J."/>
            <person name="Bentley S.D."/>
            <person name="Kilian M."/>
            <person name="Ehrlich G.D."/>
            <person name="Rappuoli R."/>
            <person name="Moxon E.R."/>
            <person name="Masignani V."/>
        </authorList>
    </citation>
    <scope>NUCLEOTIDE SEQUENCE [LARGE SCALE GENOMIC DNA]</scope>
    <source>
        <strain>Taiwan19F-14</strain>
    </source>
</reference>
<keyword id="KW-0066">ATP synthesis</keyword>
<keyword id="KW-1003">Cell membrane</keyword>
<keyword id="KW-0139">CF(1)</keyword>
<keyword id="KW-0375">Hydrogen ion transport</keyword>
<keyword id="KW-0406">Ion transport</keyword>
<keyword id="KW-0472">Membrane</keyword>
<keyword id="KW-0813">Transport</keyword>